<protein>
    <recommendedName>
        <fullName evidence="1">Octanoyltransferase</fullName>
        <ecNumber evidence="1">2.3.1.181</ecNumber>
    </recommendedName>
    <alternativeName>
        <fullName evidence="1">Lipoate-protein ligase B</fullName>
    </alternativeName>
    <alternativeName>
        <fullName evidence="1">Lipoyl/octanoyl transferase</fullName>
    </alternativeName>
    <alternativeName>
        <fullName evidence="1">Octanoyl-[acyl-carrier-protein]-protein N-octanoyltransferase</fullName>
    </alternativeName>
</protein>
<keyword id="KW-0012">Acyltransferase</keyword>
<keyword id="KW-0963">Cytoplasm</keyword>
<keyword id="KW-1185">Reference proteome</keyword>
<keyword id="KW-0808">Transferase</keyword>
<evidence type="ECO:0000255" key="1">
    <source>
        <dbReference type="HAMAP-Rule" id="MF_00013"/>
    </source>
</evidence>
<evidence type="ECO:0000255" key="2">
    <source>
        <dbReference type="PROSITE-ProRule" id="PRU01067"/>
    </source>
</evidence>
<gene>
    <name evidence="1" type="primary">lipB</name>
    <name type="ordered locus">Dshi_2381</name>
</gene>
<proteinExistence type="inferred from homology"/>
<organism>
    <name type="scientific">Dinoroseobacter shibae (strain DSM 16493 / NCIMB 14021 / DFL 12)</name>
    <dbReference type="NCBI Taxonomy" id="398580"/>
    <lineage>
        <taxon>Bacteria</taxon>
        <taxon>Pseudomonadati</taxon>
        <taxon>Pseudomonadota</taxon>
        <taxon>Alphaproteobacteria</taxon>
        <taxon>Rhodobacterales</taxon>
        <taxon>Roseobacteraceae</taxon>
        <taxon>Dinoroseobacter</taxon>
    </lineage>
</organism>
<dbReference type="EC" id="2.3.1.181" evidence="1"/>
<dbReference type="EMBL" id="CP000830">
    <property type="protein sequence ID" value="ABV94117.1"/>
    <property type="molecule type" value="Genomic_DNA"/>
</dbReference>
<dbReference type="RefSeq" id="WP_012179048.1">
    <property type="nucleotide sequence ID" value="NC_009952.1"/>
</dbReference>
<dbReference type="SMR" id="A8LRT6"/>
<dbReference type="STRING" id="398580.Dshi_2381"/>
<dbReference type="KEGG" id="dsh:Dshi_2381"/>
<dbReference type="eggNOG" id="COG0321">
    <property type="taxonomic scope" value="Bacteria"/>
</dbReference>
<dbReference type="HOGENOM" id="CLU_035168_3_0_5"/>
<dbReference type="OrthoDB" id="9787061at2"/>
<dbReference type="UniPathway" id="UPA00538">
    <property type="reaction ID" value="UER00592"/>
</dbReference>
<dbReference type="Proteomes" id="UP000006833">
    <property type="component" value="Chromosome"/>
</dbReference>
<dbReference type="GO" id="GO:0005737">
    <property type="term" value="C:cytoplasm"/>
    <property type="evidence" value="ECO:0007669"/>
    <property type="project" value="UniProtKB-SubCell"/>
</dbReference>
<dbReference type="GO" id="GO:0033819">
    <property type="term" value="F:lipoyl(octanoyl) transferase activity"/>
    <property type="evidence" value="ECO:0007669"/>
    <property type="project" value="UniProtKB-EC"/>
</dbReference>
<dbReference type="GO" id="GO:0036211">
    <property type="term" value="P:protein modification process"/>
    <property type="evidence" value="ECO:0007669"/>
    <property type="project" value="InterPro"/>
</dbReference>
<dbReference type="CDD" id="cd16444">
    <property type="entry name" value="LipB"/>
    <property type="match status" value="1"/>
</dbReference>
<dbReference type="Gene3D" id="3.30.930.10">
    <property type="entry name" value="Bira Bifunctional Protein, Domain 2"/>
    <property type="match status" value="1"/>
</dbReference>
<dbReference type="HAMAP" id="MF_00013">
    <property type="entry name" value="LipB"/>
    <property type="match status" value="1"/>
</dbReference>
<dbReference type="InterPro" id="IPR045864">
    <property type="entry name" value="aa-tRNA-synth_II/BPL/LPL"/>
</dbReference>
<dbReference type="InterPro" id="IPR004143">
    <property type="entry name" value="BPL_LPL_catalytic"/>
</dbReference>
<dbReference type="InterPro" id="IPR000544">
    <property type="entry name" value="Octanoyltransferase"/>
</dbReference>
<dbReference type="InterPro" id="IPR020605">
    <property type="entry name" value="Octanoyltransferase_CS"/>
</dbReference>
<dbReference type="NCBIfam" id="TIGR00214">
    <property type="entry name" value="lipB"/>
    <property type="match status" value="1"/>
</dbReference>
<dbReference type="NCBIfam" id="NF010921">
    <property type="entry name" value="PRK14341.1"/>
    <property type="match status" value="1"/>
</dbReference>
<dbReference type="NCBIfam" id="NF010925">
    <property type="entry name" value="PRK14345.1"/>
    <property type="match status" value="1"/>
</dbReference>
<dbReference type="PANTHER" id="PTHR10993:SF7">
    <property type="entry name" value="LIPOYLTRANSFERASE 2, MITOCHONDRIAL-RELATED"/>
    <property type="match status" value="1"/>
</dbReference>
<dbReference type="PANTHER" id="PTHR10993">
    <property type="entry name" value="OCTANOYLTRANSFERASE"/>
    <property type="match status" value="1"/>
</dbReference>
<dbReference type="Pfam" id="PF21948">
    <property type="entry name" value="LplA-B_cat"/>
    <property type="match status" value="1"/>
</dbReference>
<dbReference type="PIRSF" id="PIRSF016262">
    <property type="entry name" value="LPLase"/>
    <property type="match status" value="1"/>
</dbReference>
<dbReference type="SUPFAM" id="SSF55681">
    <property type="entry name" value="Class II aaRS and biotin synthetases"/>
    <property type="match status" value="1"/>
</dbReference>
<dbReference type="PROSITE" id="PS51733">
    <property type="entry name" value="BPL_LPL_CATALYTIC"/>
    <property type="match status" value="1"/>
</dbReference>
<dbReference type="PROSITE" id="PS01313">
    <property type="entry name" value="LIPB"/>
    <property type="match status" value="1"/>
</dbReference>
<feature type="chain" id="PRO_1000074000" description="Octanoyltransferase">
    <location>
        <begin position="1"/>
        <end position="220"/>
    </location>
</feature>
<feature type="domain" description="BPL/LPL catalytic" evidence="2">
    <location>
        <begin position="29"/>
        <end position="217"/>
    </location>
</feature>
<feature type="active site" description="Acyl-thioester intermediate" evidence="1">
    <location>
        <position position="179"/>
    </location>
</feature>
<feature type="binding site" evidence="1">
    <location>
        <begin position="68"/>
        <end position="75"/>
    </location>
    <ligand>
        <name>substrate</name>
    </ligand>
</feature>
<feature type="binding site" evidence="1">
    <location>
        <begin position="148"/>
        <end position="150"/>
    </location>
    <ligand>
        <name>substrate</name>
    </ligand>
</feature>
<feature type="binding site" evidence="1">
    <location>
        <begin position="161"/>
        <end position="163"/>
    </location>
    <ligand>
        <name>substrate</name>
    </ligand>
</feature>
<feature type="site" description="Lowers pKa of active site Cys" evidence="1">
    <location>
        <position position="145"/>
    </location>
</feature>
<sequence>MDWIISDGLVPYEDALATMEARVAAISEGRAPEMIWLLEHPPLYTAGTSADPADLTDPDRFPVHTARRGGQYTYHGPGQRVVYVMLDLGKRGRDVRQFVCRMEAWVIATLAEFNVTGERREGRVGVWVQRQDKPRTAAGQLQEDKIAAIGVRLRKWVSFHGLSINVEPDLDHFSGIVPCGITEHGVTSLVDLGLPVTMADVDVALRKCFEETFGPLPVEA</sequence>
<name>LIPB_DINSH</name>
<accession>A8LRT6</accession>
<comment type="function">
    <text evidence="1">Catalyzes the transfer of endogenously produced octanoic acid from octanoyl-acyl-carrier-protein onto the lipoyl domains of lipoate-dependent enzymes. Lipoyl-ACP can also act as a substrate although octanoyl-ACP is likely to be the physiological substrate.</text>
</comment>
<comment type="catalytic activity">
    <reaction evidence="1">
        <text>octanoyl-[ACP] + L-lysyl-[protein] = N(6)-octanoyl-L-lysyl-[protein] + holo-[ACP] + H(+)</text>
        <dbReference type="Rhea" id="RHEA:17665"/>
        <dbReference type="Rhea" id="RHEA-COMP:9636"/>
        <dbReference type="Rhea" id="RHEA-COMP:9685"/>
        <dbReference type="Rhea" id="RHEA-COMP:9752"/>
        <dbReference type="Rhea" id="RHEA-COMP:9928"/>
        <dbReference type="ChEBI" id="CHEBI:15378"/>
        <dbReference type="ChEBI" id="CHEBI:29969"/>
        <dbReference type="ChEBI" id="CHEBI:64479"/>
        <dbReference type="ChEBI" id="CHEBI:78463"/>
        <dbReference type="ChEBI" id="CHEBI:78809"/>
        <dbReference type="EC" id="2.3.1.181"/>
    </reaction>
</comment>
<comment type="pathway">
    <text evidence="1">Protein modification; protein lipoylation via endogenous pathway; protein N(6)-(lipoyl)lysine from octanoyl-[acyl-carrier-protein]: step 1/2.</text>
</comment>
<comment type="subcellular location">
    <subcellularLocation>
        <location evidence="1">Cytoplasm</location>
    </subcellularLocation>
</comment>
<comment type="miscellaneous">
    <text evidence="1">In the reaction, the free carboxyl group of octanoic acid is attached via an amide linkage to the epsilon-amino group of a specific lysine residue of lipoyl domains of lipoate-dependent enzymes.</text>
</comment>
<comment type="similarity">
    <text evidence="1">Belongs to the LipB family.</text>
</comment>
<reference key="1">
    <citation type="journal article" date="2010" name="ISME J.">
        <title>The complete genome sequence of the algal symbiont Dinoroseobacter shibae: a hitchhiker's guide to life in the sea.</title>
        <authorList>
            <person name="Wagner-Dobler I."/>
            <person name="Ballhausen B."/>
            <person name="Berger M."/>
            <person name="Brinkhoff T."/>
            <person name="Buchholz I."/>
            <person name="Bunk B."/>
            <person name="Cypionka H."/>
            <person name="Daniel R."/>
            <person name="Drepper T."/>
            <person name="Gerdts G."/>
            <person name="Hahnke S."/>
            <person name="Han C."/>
            <person name="Jahn D."/>
            <person name="Kalhoefer D."/>
            <person name="Kiss H."/>
            <person name="Klenk H.P."/>
            <person name="Kyrpides N."/>
            <person name="Liebl W."/>
            <person name="Liesegang H."/>
            <person name="Meincke L."/>
            <person name="Pati A."/>
            <person name="Petersen J."/>
            <person name="Piekarski T."/>
            <person name="Pommerenke C."/>
            <person name="Pradella S."/>
            <person name="Pukall R."/>
            <person name="Rabus R."/>
            <person name="Stackebrandt E."/>
            <person name="Thole S."/>
            <person name="Thompson L."/>
            <person name="Tielen P."/>
            <person name="Tomasch J."/>
            <person name="von Jan M."/>
            <person name="Wanphrut N."/>
            <person name="Wichels A."/>
            <person name="Zech H."/>
            <person name="Simon M."/>
        </authorList>
    </citation>
    <scope>NUCLEOTIDE SEQUENCE [LARGE SCALE GENOMIC DNA]</scope>
    <source>
        <strain>DSM 16493 / NCIMB 14021 / DFL 12</strain>
    </source>
</reference>